<reference key="1">
    <citation type="journal article" date="2006" name="Proc. Natl. Acad. Sci. U.S.A.">
        <title>Evolution of sensory complexity recorded in a myxobacterial genome.</title>
        <authorList>
            <person name="Goldman B.S."/>
            <person name="Nierman W.C."/>
            <person name="Kaiser D."/>
            <person name="Slater S.C."/>
            <person name="Durkin A.S."/>
            <person name="Eisen J.A."/>
            <person name="Ronning C.M."/>
            <person name="Barbazuk W.B."/>
            <person name="Blanchard M."/>
            <person name="Field C."/>
            <person name="Halling C."/>
            <person name="Hinkle G."/>
            <person name="Iartchuk O."/>
            <person name="Kim H.S."/>
            <person name="Mackenzie C."/>
            <person name="Madupu R."/>
            <person name="Miller N."/>
            <person name="Shvartsbeyn A."/>
            <person name="Sullivan S.A."/>
            <person name="Vaudin M."/>
            <person name="Wiegand R."/>
            <person name="Kaplan H.B."/>
        </authorList>
    </citation>
    <scope>NUCLEOTIDE SEQUENCE [LARGE SCALE GENOMIC DNA]</scope>
    <source>
        <strain>DK1622</strain>
    </source>
</reference>
<sequence>MCMALQPEVSRWDVTPSEAVELQRRLREQLVLRPPPGLKVERIAGADISTEKGKDTGFGGFVVLDVETLAPVAQSEAVVTLHFPYVPGLLSFRELPTIAAAWERLTVRPDVVIFDGQGTAHPRRMGIACHGGLLFGVPSIGCAKSLLVGTHGPLGEARGSTAPLMHRGEVVGMAVRTRKGVQPVYVSPGHLMDLPTAVEWVLKVSPKYREPETTRHAHRLVNALRRADGEAAELE</sequence>
<proteinExistence type="inferred from homology"/>
<evidence type="ECO:0000255" key="1">
    <source>
        <dbReference type="HAMAP-Rule" id="MF_00801"/>
    </source>
</evidence>
<feature type="chain" id="PRO_1000046999" description="Endonuclease V">
    <location>
        <begin position="1"/>
        <end position="235"/>
    </location>
</feature>
<feature type="binding site" evidence="1">
    <location>
        <position position="47"/>
    </location>
    <ligand>
        <name>Mg(2+)</name>
        <dbReference type="ChEBI" id="CHEBI:18420"/>
    </ligand>
</feature>
<feature type="binding site" evidence="1">
    <location>
        <position position="115"/>
    </location>
    <ligand>
        <name>Mg(2+)</name>
        <dbReference type="ChEBI" id="CHEBI:18420"/>
    </ligand>
</feature>
<feature type="site" description="Interaction with target DNA" evidence="1">
    <location>
        <position position="85"/>
    </location>
</feature>
<gene>
    <name evidence="1" type="primary">nfi</name>
    <name type="ordered locus">MXAN_1503</name>
</gene>
<dbReference type="EC" id="3.1.21.7" evidence="1"/>
<dbReference type="EMBL" id="CP000113">
    <property type="protein sequence ID" value="ABF87431.1"/>
    <property type="molecule type" value="Genomic_DNA"/>
</dbReference>
<dbReference type="RefSeq" id="WP_011551614.1">
    <property type="nucleotide sequence ID" value="NC_008095.1"/>
</dbReference>
<dbReference type="SMR" id="Q1DC68"/>
<dbReference type="STRING" id="246197.MXAN_1503"/>
<dbReference type="EnsemblBacteria" id="ABF87431">
    <property type="protein sequence ID" value="ABF87431"/>
    <property type="gene ID" value="MXAN_1503"/>
</dbReference>
<dbReference type="GeneID" id="41358949"/>
<dbReference type="KEGG" id="mxa:MXAN_1503"/>
<dbReference type="eggNOG" id="COG1515">
    <property type="taxonomic scope" value="Bacteria"/>
</dbReference>
<dbReference type="HOGENOM" id="CLU_047631_1_1_7"/>
<dbReference type="OrthoDB" id="9790916at2"/>
<dbReference type="Proteomes" id="UP000002402">
    <property type="component" value="Chromosome"/>
</dbReference>
<dbReference type="GO" id="GO:0005737">
    <property type="term" value="C:cytoplasm"/>
    <property type="evidence" value="ECO:0007669"/>
    <property type="project" value="UniProtKB-SubCell"/>
</dbReference>
<dbReference type="GO" id="GO:0043737">
    <property type="term" value="F:deoxyribonuclease V activity"/>
    <property type="evidence" value="ECO:0007669"/>
    <property type="project" value="UniProtKB-UniRule"/>
</dbReference>
<dbReference type="GO" id="GO:0000287">
    <property type="term" value="F:magnesium ion binding"/>
    <property type="evidence" value="ECO:0007669"/>
    <property type="project" value="UniProtKB-UniRule"/>
</dbReference>
<dbReference type="GO" id="GO:0016891">
    <property type="term" value="F:RNA endonuclease activity, producing 5'-phosphomonoesters"/>
    <property type="evidence" value="ECO:0007669"/>
    <property type="project" value="TreeGrafter"/>
</dbReference>
<dbReference type="GO" id="GO:0003727">
    <property type="term" value="F:single-stranded RNA binding"/>
    <property type="evidence" value="ECO:0007669"/>
    <property type="project" value="TreeGrafter"/>
</dbReference>
<dbReference type="GO" id="GO:0006281">
    <property type="term" value="P:DNA repair"/>
    <property type="evidence" value="ECO:0007669"/>
    <property type="project" value="UniProtKB-UniRule"/>
</dbReference>
<dbReference type="CDD" id="cd06559">
    <property type="entry name" value="Endonuclease_V"/>
    <property type="match status" value="1"/>
</dbReference>
<dbReference type="Gene3D" id="3.30.2170.10">
    <property type="entry name" value="archaeoglobus fulgidus dsm 4304 superfamily"/>
    <property type="match status" value="1"/>
</dbReference>
<dbReference type="HAMAP" id="MF_00801">
    <property type="entry name" value="Endonuclease_5"/>
    <property type="match status" value="1"/>
</dbReference>
<dbReference type="InterPro" id="IPR007581">
    <property type="entry name" value="Endonuclease-V"/>
</dbReference>
<dbReference type="NCBIfam" id="NF008629">
    <property type="entry name" value="PRK11617.1"/>
    <property type="match status" value="1"/>
</dbReference>
<dbReference type="PANTHER" id="PTHR28511">
    <property type="entry name" value="ENDONUCLEASE V"/>
    <property type="match status" value="1"/>
</dbReference>
<dbReference type="PANTHER" id="PTHR28511:SF1">
    <property type="entry name" value="ENDONUCLEASE V"/>
    <property type="match status" value="1"/>
</dbReference>
<dbReference type="Pfam" id="PF04493">
    <property type="entry name" value="Endonuclease_5"/>
    <property type="match status" value="1"/>
</dbReference>
<comment type="function">
    <text evidence="1">DNA repair enzyme involved in the repair of deaminated bases. Selectively cleaves double-stranded DNA at the second phosphodiester bond 3' to a deoxyinosine leaving behind the intact lesion on the nicked DNA.</text>
</comment>
<comment type="catalytic activity">
    <reaction evidence="1">
        <text>Endonucleolytic cleavage at apurinic or apyrimidinic sites to products with a 5'-phosphate.</text>
        <dbReference type="EC" id="3.1.21.7"/>
    </reaction>
</comment>
<comment type="cofactor">
    <cofactor evidence="1">
        <name>Mg(2+)</name>
        <dbReference type="ChEBI" id="CHEBI:18420"/>
    </cofactor>
</comment>
<comment type="subcellular location">
    <subcellularLocation>
        <location evidence="1">Cytoplasm</location>
    </subcellularLocation>
</comment>
<comment type="similarity">
    <text evidence="1">Belongs to the endonuclease V family.</text>
</comment>
<accession>Q1DC68</accession>
<organism>
    <name type="scientific">Myxococcus xanthus (strain DK1622)</name>
    <dbReference type="NCBI Taxonomy" id="246197"/>
    <lineage>
        <taxon>Bacteria</taxon>
        <taxon>Pseudomonadati</taxon>
        <taxon>Myxococcota</taxon>
        <taxon>Myxococcia</taxon>
        <taxon>Myxococcales</taxon>
        <taxon>Cystobacterineae</taxon>
        <taxon>Myxococcaceae</taxon>
        <taxon>Myxococcus</taxon>
    </lineage>
</organism>
<keyword id="KW-0963">Cytoplasm</keyword>
<keyword id="KW-0227">DNA damage</keyword>
<keyword id="KW-0234">DNA repair</keyword>
<keyword id="KW-0255">Endonuclease</keyword>
<keyword id="KW-0378">Hydrolase</keyword>
<keyword id="KW-0460">Magnesium</keyword>
<keyword id="KW-0479">Metal-binding</keyword>
<keyword id="KW-0540">Nuclease</keyword>
<keyword id="KW-1185">Reference proteome</keyword>
<protein>
    <recommendedName>
        <fullName evidence="1">Endonuclease V</fullName>
        <ecNumber evidence="1">3.1.21.7</ecNumber>
    </recommendedName>
    <alternativeName>
        <fullName evidence="1">Deoxyinosine 3'endonuclease</fullName>
    </alternativeName>
    <alternativeName>
        <fullName evidence="1">Deoxyribonuclease V</fullName>
        <shortName evidence="1">DNase V</shortName>
    </alternativeName>
</protein>
<name>NFI_MYXXD</name>